<dbReference type="PIR" id="A32000">
    <property type="entry name" value="A32000"/>
</dbReference>
<dbReference type="Proteomes" id="UP001318040">
    <property type="component" value="Unplaced"/>
</dbReference>
<dbReference type="GO" id="GO:0005615">
    <property type="term" value="C:extracellular space"/>
    <property type="evidence" value="ECO:0007669"/>
    <property type="project" value="TreeGrafter"/>
</dbReference>
<dbReference type="GO" id="GO:0005179">
    <property type="term" value="F:hormone activity"/>
    <property type="evidence" value="ECO:0007669"/>
    <property type="project" value="UniProtKB-KW"/>
</dbReference>
<dbReference type="GO" id="GO:0030334">
    <property type="term" value="P:regulation of cell migration"/>
    <property type="evidence" value="ECO:0007669"/>
    <property type="project" value="TreeGrafter"/>
</dbReference>
<dbReference type="InterPro" id="IPR004250">
    <property type="entry name" value="Somatostatin"/>
</dbReference>
<dbReference type="InterPro" id="IPR018142">
    <property type="entry name" value="Somatostatin/Cortistatin_C"/>
</dbReference>
<dbReference type="PANTHER" id="PTHR10558">
    <property type="entry name" value="SOMATOSTATIN"/>
    <property type="match status" value="1"/>
</dbReference>
<dbReference type="Pfam" id="PF03002">
    <property type="entry name" value="Somatostatin"/>
    <property type="match status" value="1"/>
</dbReference>
<proteinExistence type="evidence at protein level"/>
<organism>
    <name type="scientific">Petromyzon marinus</name>
    <name type="common">Sea lamprey</name>
    <dbReference type="NCBI Taxonomy" id="7757"/>
    <lineage>
        <taxon>Eukaryota</taxon>
        <taxon>Metazoa</taxon>
        <taxon>Chordata</taxon>
        <taxon>Craniata</taxon>
        <taxon>Vertebrata</taxon>
        <taxon>Cyclostomata</taxon>
        <taxon>Hyperoartia</taxon>
        <taxon>Petromyzontiformes</taxon>
        <taxon>Petromyzontidae</taxon>
        <taxon>Petromyzon</taxon>
    </lineage>
</organism>
<accession>P21779</accession>
<reference key="1">
    <citation type="journal article" date="1988" name="J. Biol. Chem.">
        <title>Isolation and characterization of a variant somatostatin-14 and two related somatostatins of 34 and 37 residues from lamprey (Petromyzon marinus).</title>
        <authorList>
            <person name="Andrews P.C."/>
            <person name="Pollock H.G."/>
            <person name="Elliott W.M."/>
            <person name="Youson J.H."/>
            <person name="Plisetskaya E.M."/>
        </authorList>
    </citation>
    <scope>PROTEIN SEQUENCE</scope>
    <source>
        <tissue>Pancreas</tissue>
    </source>
</reference>
<evidence type="ECO:0000305" key="1"/>
<feature type="propeptide" id="PRO_0000045872">
    <location>
        <begin position="1"/>
        <end position="2"/>
    </location>
</feature>
<feature type="peptide" id="PRO_0000033144" description="Somatostatin-34">
    <location>
        <begin position="4"/>
        <end position="37"/>
    </location>
</feature>
<feature type="peptide" id="PRO_0000033145" description="Somatostatin-14">
    <location>
        <begin position="24"/>
        <end position="37"/>
    </location>
</feature>
<feature type="disulfide bond">
    <location>
        <begin position="26"/>
        <end position="37"/>
    </location>
</feature>
<comment type="function">
    <text>Somatostatin inhibits the release of somatotropin.</text>
</comment>
<comment type="subcellular location">
    <subcellularLocation>
        <location>Secreted</location>
    </subcellularLocation>
</comment>
<comment type="similarity">
    <text evidence="1">Belongs to the somatostatin family.</text>
</comment>
<sequence length="37" mass="4039">ALRAAAVAGSPQQLLPLGQRERKAGCKNFFWKTFSSC</sequence>
<protein>
    <recommendedName>
        <fullName>Somatostatin-37</fullName>
    </recommendedName>
    <component>
        <recommendedName>
            <fullName>Somatostatin-34</fullName>
        </recommendedName>
    </component>
    <component>
        <recommendedName>
            <fullName>Somatostatin-14</fullName>
        </recommendedName>
    </component>
</protein>
<name>SMS_PETMA</name>
<keyword id="KW-0165">Cleavage on pair of basic residues</keyword>
<keyword id="KW-0903">Direct protein sequencing</keyword>
<keyword id="KW-1015">Disulfide bond</keyword>
<keyword id="KW-0372">Hormone</keyword>
<keyword id="KW-0964">Secreted</keyword>
<gene>
    <name type="primary">sst</name>
</gene>